<sequence length="101" mass="11249">MMLEHILVLSAYLFSIGIYGLITSRNMVRALMCLELILNAVNINFVTFSDFFDSRQLKGNIFSIFVIAIAAAEAAIGSAIVSSIYRNRKSTRINQSTLLNK</sequence>
<name>NU4LC_GOSHI</name>
<proteinExistence type="inferred from homology"/>
<keyword id="KW-0150">Chloroplast</keyword>
<keyword id="KW-0472">Membrane</keyword>
<keyword id="KW-0520">NAD</keyword>
<keyword id="KW-0521">NADP</keyword>
<keyword id="KW-0934">Plastid</keyword>
<keyword id="KW-0618">Plastoquinone</keyword>
<keyword id="KW-0874">Quinone</keyword>
<keyword id="KW-1185">Reference proteome</keyword>
<keyword id="KW-0793">Thylakoid</keyword>
<keyword id="KW-1278">Translocase</keyword>
<keyword id="KW-0812">Transmembrane</keyword>
<keyword id="KW-1133">Transmembrane helix</keyword>
<keyword id="KW-0813">Transport</keyword>
<accession>Q2L957</accession>
<dbReference type="EC" id="7.1.1.-" evidence="1"/>
<dbReference type="EMBL" id="DQ345959">
    <property type="protein sequence ID" value="ABC73680.1"/>
    <property type="molecule type" value="Genomic_DNA"/>
</dbReference>
<dbReference type="RefSeq" id="YP_538988.1">
    <property type="nucleotide sequence ID" value="NC_007944.1"/>
</dbReference>
<dbReference type="SMR" id="Q2L957"/>
<dbReference type="GeneID" id="3989239"/>
<dbReference type="KEGG" id="ghi:3989239"/>
<dbReference type="OrthoDB" id="68206at41938"/>
<dbReference type="Proteomes" id="UP000189702">
    <property type="component" value="Chloroplast Pltd"/>
</dbReference>
<dbReference type="GO" id="GO:0009535">
    <property type="term" value="C:chloroplast thylakoid membrane"/>
    <property type="evidence" value="ECO:0007669"/>
    <property type="project" value="UniProtKB-SubCell"/>
</dbReference>
<dbReference type="GO" id="GO:0030964">
    <property type="term" value="C:NADH dehydrogenase complex"/>
    <property type="evidence" value="ECO:0000318"/>
    <property type="project" value="GO_Central"/>
</dbReference>
<dbReference type="GO" id="GO:0016655">
    <property type="term" value="F:oxidoreductase activity, acting on NAD(P)H, quinone or similar compound as acceptor"/>
    <property type="evidence" value="ECO:0007669"/>
    <property type="project" value="UniProtKB-UniRule"/>
</dbReference>
<dbReference type="GO" id="GO:0048038">
    <property type="term" value="F:quinone binding"/>
    <property type="evidence" value="ECO:0007669"/>
    <property type="project" value="UniProtKB-KW"/>
</dbReference>
<dbReference type="GO" id="GO:0042773">
    <property type="term" value="P:ATP synthesis coupled electron transport"/>
    <property type="evidence" value="ECO:0007669"/>
    <property type="project" value="InterPro"/>
</dbReference>
<dbReference type="GO" id="GO:0019684">
    <property type="term" value="P:photosynthesis, light reaction"/>
    <property type="evidence" value="ECO:0007669"/>
    <property type="project" value="UniProtKB-UniRule"/>
</dbReference>
<dbReference type="FunFam" id="1.10.287.3510:FF:000001">
    <property type="entry name" value="NADH-quinone oxidoreductase subunit K"/>
    <property type="match status" value="1"/>
</dbReference>
<dbReference type="Gene3D" id="1.10.287.3510">
    <property type="match status" value="1"/>
</dbReference>
<dbReference type="HAMAP" id="MF_01456">
    <property type="entry name" value="NDH1_NuoK"/>
    <property type="match status" value="1"/>
</dbReference>
<dbReference type="InterPro" id="IPR001133">
    <property type="entry name" value="NADH_UbQ_OxRdtase_chain4L/K"/>
</dbReference>
<dbReference type="InterPro" id="IPR039428">
    <property type="entry name" value="NUOK/Mnh_C1-like"/>
</dbReference>
<dbReference type="NCBIfam" id="NF004320">
    <property type="entry name" value="PRK05715.1-2"/>
    <property type="match status" value="1"/>
</dbReference>
<dbReference type="NCBIfam" id="NF004322">
    <property type="entry name" value="PRK05715.1-4"/>
    <property type="match status" value="1"/>
</dbReference>
<dbReference type="PANTHER" id="PTHR11434:SF16">
    <property type="entry name" value="NADH-UBIQUINONE OXIDOREDUCTASE CHAIN 4L"/>
    <property type="match status" value="1"/>
</dbReference>
<dbReference type="PANTHER" id="PTHR11434">
    <property type="entry name" value="NADH-UBIQUINONE OXIDOREDUCTASE SUBUNIT ND4L"/>
    <property type="match status" value="1"/>
</dbReference>
<dbReference type="Pfam" id="PF00420">
    <property type="entry name" value="Oxidored_q2"/>
    <property type="match status" value="1"/>
</dbReference>
<reference key="1">
    <citation type="journal article" date="2006" name="BMC Genomics">
        <title>The complete chloroplast genome sequence of Gossypium hirsutum: organization and phylogenetic relationships to other angiosperms.</title>
        <authorList>
            <person name="Lee S.-B."/>
            <person name="Kaittanis C."/>
            <person name="Jansen R.K."/>
            <person name="Hostetler J.B."/>
            <person name="Tallon L.J."/>
            <person name="Town C.D."/>
            <person name="Daniell H."/>
        </authorList>
    </citation>
    <scope>NUCLEOTIDE SEQUENCE [LARGE SCALE GENOMIC DNA]</scope>
    <source>
        <strain>cv. Coker 310FR</strain>
    </source>
</reference>
<organism>
    <name type="scientific">Gossypium hirsutum</name>
    <name type="common">Upland cotton</name>
    <name type="synonym">Gossypium mexicanum</name>
    <dbReference type="NCBI Taxonomy" id="3635"/>
    <lineage>
        <taxon>Eukaryota</taxon>
        <taxon>Viridiplantae</taxon>
        <taxon>Streptophyta</taxon>
        <taxon>Embryophyta</taxon>
        <taxon>Tracheophyta</taxon>
        <taxon>Spermatophyta</taxon>
        <taxon>Magnoliopsida</taxon>
        <taxon>eudicotyledons</taxon>
        <taxon>Gunneridae</taxon>
        <taxon>Pentapetalae</taxon>
        <taxon>rosids</taxon>
        <taxon>malvids</taxon>
        <taxon>Malvales</taxon>
        <taxon>Malvaceae</taxon>
        <taxon>Malvoideae</taxon>
        <taxon>Gossypium</taxon>
    </lineage>
</organism>
<feature type="chain" id="PRO_0000360331" description="NAD(P)H-quinone oxidoreductase subunit 4L, chloroplastic">
    <location>
        <begin position="1"/>
        <end position="101"/>
    </location>
</feature>
<feature type="transmembrane region" description="Helical" evidence="1">
    <location>
        <begin position="2"/>
        <end position="22"/>
    </location>
</feature>
<feature type="transmembrane region" description="Helical" evidence="1">
    <location>
        <begin position="32"/>
        <end position="52"/>
    </location>
</feature>
<feature type="transmembrane region" description="Helical" evidence="1">
    <location>
        <begin position="61"/>
        <end position="81"/>
    </location>
</feature>
<evidence type="ECO:0000255" key="1">
    <source>
        <dbReference type="HAMAP-Rule" id="MF_01456"/>
    </source>
</evidence>
<comment type="function">
    <text evidence="1">NDH shuttles electrons from NAD(P)H:plastoquinone, via FMN and iron-sulfur (Fe-S) centers, to quinones in the photosynthetic chain and possibly in a chloroplast respiratory chain. The immediate electron acceptor for the enzyme in this species is believed to be plastoquinone. Couples the redox reaction to proton translocation, and thus conserves the redox energy in a proton gradient.</text>
</comment>
<comment type="catalytic activity">
    <reaction evidence="1">
        <text>a plastoquinone + NADH + (n+1) H(+)(in) = a plastoquinol + NAD(+) + n H(+)(out)</text>
        <dbReference type="Rhea" id="RHEA:42608"/>
        <dbReference type="Rhea" id="RHEA-COMP:9561"/>
        <dbReference type="Rhea" id="RHEA-COMP:9562"/>
        <dbReference type="ChEBI" id="CHEBI:15378"/>
        <dbReference type="ChEBI" id="CHEBI:17757"/>
        <dbReference type="ChEBI" id="CHEBI:57540"/>
        <dbReference type="ChEBI" id="CHEBI:57945"/>
        <dbReference type="ChEBI" id="CHEBI:62192"/>
    </reaction>
</comment>
<comment type="catalytic activity">
    <reaction evidence="1">
        <text>a plastoquinone + NADPH + (n+1) H(+)(in) = a plastoquinol + NADP(+) + n H(+)(out)</text>
        <dbReference type="Rhea" id="RHEA:42612"/>
        <dbReference type="Rhea" id="RHEA-COMP:9561"/>
        <dbReference type="Rhea" id="RHEA-COMP:9562"/>
        <dbReference type="ChEBI" id="CHEBI:15378"/>
        <dbReference type="ChEBI" id="CHEBI:17757"/>
        <dbReference type="ChEBI" id="CHEBI:57783"/>
        <dbReference type="ChEBI" id="CHEBI:58349"/>
        <dbReference type="ChEBI" id="CHEBI:62192"/>
    </reaction>
</comment>
<comment type="subunit">
    <text evidence="1">NDH is composed of at least 16 different subunits, 5 of which are encoded in the nucleus.</text>
</comment>
<comment type="subcellular location">
    <subcellularLocation>
        <location evidence="1">Plastid</location>
        <location evidence="1">Chloroplast thylakoid membrane</location>
        <topology evidence="1">Multi-pass membrane protein</topology>
    </subcellularLocation>
</comment>
<comment type="similarity">
    <text evidence="1">Belongs to the complex I subunit 4L family.</text>
</comment>
<geneLocation type="chloroplast"/>
<protein>
    <recommendedName>
        <fullName evidence="1">NAD(P)H-quinone oxidoreductase subunit 4L, chloroplastic</fullName>
        <ecNumber evidence="1">7.1.1.-</ecNumber>
    </recommendedName>
    <alternativeName>
        <fullName evidence="1">NAD(P)H dehydrogenase subunit 4L</fullName>
    </alternativeName>
    <alternativeName>
        <fullName evidence="1">NADH-plastoquinone oxidoreductase subunit 4L</fullName>
    </alternativeName>
</protein>
<gene>
    <name evidence="1" type="primary">ndhE</name>
</gene>